<protein>
    <recommendedName>
        <fullName>Uncharacterized 5.2 kDa protein in arn-motA intergenic region</fullName>
    </recommendedName>
</protein>
<name>Y16B_BPT4</name>
<organismHost>
    <name type="scientific">Escherichia coli</name>
    <dbReference type="NCBI Taxonomy" id="562"/>
</organismHost>
<sequence length="43" mass="5173">MGYTDTRDLREHIFECGVAKKFSFTCKCLREVIQHYEQFSRKA</sequence>
<gene>
    <name type="primary">y16B</name>
    <name type="synonym">arn.1</name>
    <name type="synonym">asiA.2</name>
    <name type="synonym">motA.-5</name>
</gene>
<organism>
    <name type="scientific">Enterobacteria phage T4</name>
    <name type="common">Bacteriophage T4</name>
    <dbReference type="NCBI Taxonomy" id="10665"/>
    <lineage>
        <taxon>Viruses</taxon>
        <taxon>Duplodnaviria</taxon>
        <taxon>Heunggongvirae</taxon>
        <taxon>Uroviricota</taxon>
        <taxon>Caudoviricetes</taxon>
        <taxon>Straboviridae</taxon>
        <taxon>Tevenvirinae</taxon>
        <taxon>Tequatrovirus</taxon>
    </lineage>
</organism>
<reference key="1">
    <citation type="journal article" date="1990" name="Mol. Microbiol.">
        <title>Nucleotide sequence and control of transcription of the bacteriophage T4 motA regulatory gene.</title>
        <authorList>
            <person name="Uzan M."/>
            <person name="Brody E."/>
            <person name="Favre R."/>
        </authorList>
    </citation>
    <scope>NUCLEOTIDE SEQUENCE [GENOMIC DNA]</scope>
</reference>
<reference key="2">
    <citation type="journal article" date="2003" name="Microbiol. Mol. Biol. Rev.">
        <title>Bacteriophage T4 genome.</title>
        <authorList>
            <person name="Miller E.S."/>
            <person name="Kutter E."/>
            <person name="Mosig G."/>
            <person name="Arisaka F."/>
            <person name="Kunisawa T."/>
            <person name="Ruger W."/>
        </authorList>
    </citation>
    <scope>NUCLEOTIDE SEQUENCE [LARGE SCALE GENOMIC DNA]</scope>
</reference>
<proteinExistence type="predicted"/>
<accession>P22920</accession>
<feature type="chain" id="PRO_0000165201" description="Uncharacterized 5.2 kDa protein in arn-motA intergenic region">
    <location>
        <begin position="1"/>
        <end position="43"/>
    </location>
</feature>
<keyword id="KW-1185">Reference proteome</keyword>
<dbReference type="EMBL" id="Z48569">
    <property type="protein sequence ID" value="CAA88458.1"/>
    <property type="molecule type" value="Genomic_DNA"/>
</dbReference>
<dbReference type="EMBL" id="AF158101">
    <property type="protein sequence ID" value="AAD42541.1"/>
    <property type="molecule type" value="Genomic_DNA"/>
</dbReference>
<dbReference type="PIR" id="JV0106">
    <property type="entry name" value="JV0106"/>
</dbReference>
<dbReference type="RefSeq" id="NP_049869.1">
    <property type="nucleotide sequence ID" value="NC_000866.4"/>
</dbReference>
<dbReference type="SMR" id="P22920"/>
<dbReference type="GeneID" id="1258791"/>
<dbReference type="KEGG" id="vg:1258791"/>
<dbReference type="OrthoDB" id="21600at10239"/>
<dbReference type="Proteomes" id="UP000009087">
    <property type="component" value="Segment"/>
</dbReference>